<gene>
    <name evidence="1" type="primary">rpoC</name>
    <name type="ordered locus">Adeh_1593</name>
</gene>
<feature type="chain" id="PRO_0000240794" description="DNA-directed RNA polymerase subunit beta'">
    <location>
        <begin position="1"/>
        <end position="1394"/>
    </location>
</feature>
<feature type="binding site" evidence="1">
    <location>
        <position position="70"/>
    </location>
    <ligand>
        <name>Zn(2+)</name>
        <dbReference type="ChEBI" id="CHEBI:29105"/>
        <label>1</label>
    </ligand>
</feature>
<feature type="binding site" evidence="1">
    <location>
        <position position="72"/>
    </location>
    <ligand>
        <name>Zn(2+)</name>
        <dbReference type="ChEBI" id="CHEBI:29105"/>
        <label>1</label>
    </ligand>
</feature>
<feature type="binding site" evidence="1">
    <location>
        <position position="85"/>
    </location>
    <ligand>
        <name>Zn(2+)</name>
        <dbReference type="ChEBI" id="CHEBI:29105"/>
        <label>1</label>
    </ligand>
</feature>
<feature type="binding site" evidence="1">
    <location>
        <position position="88"/>
    </location>
    <ligand>
        <name>Zn(2+)</name>
        <dbReference type="ChEBI" id="CHEBI:29105"/>
        <label>1</label>
    </ligand>
</feature>
<feature type="binding site" evidence="1">
    <location>
        <position position="470"/>
    </location>
    <ligand>
        <name>Mg(2+)</name>
        <dbReference type="ChEBI" id="CHEBI:18420"/>
    </ligand>
</feature>
<feature type="binding site" evidence="1">
    <location>
        <position position="472"/>
    </location>
    <ligand>
        <name>Mg(2+)</name>
        <dbReference type="ChEBI" id="CHEBI:18420"/>
    </ligand>
</feature>
<feature type="binding site" evidence="1">
    <location>
        <position position="474"/>
    </location>
    <ligand>
        <name>Mg(2+)</name>
        <dbReference type="ChEBI" id="CHEBI:18420"/>
    </ligand>
</feature>
<feature type="binding site" evidence="1">
    <location>
        <position position="815"/>
    </location>
    <ligand>
        <name>Zn(2+)</name>
        <dbReference type="ChEBI" id="CHEBI:29105"/>
        <label>2</label>
    </ligand>
</feature>
<feature type="binding site" evidence="1">
    <location>
        <position position="889"/>
    </location>
    <ligand>
        <name>Zn(2+)</name>
        <dbReference type="ChEBI" id="CHEBI:29105"/>
        <label>2</label>
    </ligand>
</feature>
<feature type="binding site" evidence="1">
    <location>
        <position position="896"/>
    </location>
    <ligand>
        <name>Zn(2+)</name>
        <dbReference type="ChEBI" id="CHEBI:29105"/>
        <label>2</label>
    </ligand>
</feature>
<feature type="binding site" evidence="1">
    <location>
        <position position="899"/>
    </location>
    <ligand>
        <name>Zn(2+)</name>
        <dbReference type="ChEBI" id="CHEBI:29105"/>
        <label>2</label>
    </ligand>
</feature>
<accession>Q2II85</accession>
<name>RPOC_ANADE</name>
<evidence type="ECO:0000255" key="1">
    <source>
        <dbReference type="HAMAP-Rule" id="MF_01322"/>
    </source>
</evidence>
<reference key="1">
    <citation type="submission" date="2006-01" db="EMBL/GenBank/DDBJ databases">
        <title>Complete sequence of Anaeromyxobacter dehalogenans 2CP-C.</title>
        <authorList>
            <person name="Copeland A."/>
            <person name="Lucas S."/>
            <person name="Lapidus A."/>
            <person name="Barry K."/>
            <person name="Detter J.C."/>
            <person name="Glavina T."/>
            <person name="Hammon N."/>
            <person name="Israni S."/>
            <person name="Pitluck S."/>
            <person name="Brettin T."/>
            <person name="Bruce D."/>
            <person name="Han C."/>
            <person name="Tapia R."/>
            <person name="Gilna P."/>
            <person name="Kiss H."/>
            <person name="Schmutz J."/>
            <person name="Larimer F."/>
            <person name="Land M."/>
            <person name="Kyrpides N."/>
            <person name="Anderson I."/>
            <person name="Sanford R.A."/>
            <person name="Ritalahti K.M."/>
            <person name="Thomas H.S."/>
            <person name="Kirby J.R."/>
            <person name="Zhulin I.B."/>
            <person name="Loeffler F.E."/>
            <person name="Richardson P."/>
        </authorList>
    </citation>
    <scope>NUCLEOTIDE SEQUENCE [LARGE SCALE GENOMIC DNA]</scope>
    <source>
        <strain>2CP-C</strain>
    </source>
</reference>
<sequence length="1394" mass="154552">MKDIFNFFEKPKDPLSFSAIRISLASPDKIRQWSHGEVKKPETINYRTFKPERDGLFCAKIFGPVKDYECNCGKYKRMKHRGVVCEKCGVEVIQSKVRRERLGHITLATPVAHIWFLKSLPSRIGNLLDITLKDLEKVLYCESYIVIDPKETTFQRGELLSEDRYQKALDEFGDDAFSAGMGGEAVLGLLRGVGPASKEHGEGIPGLANELRAEMKEATSDAKRKKIAKRLKVVEAFVASGNKPEWMMLEVIPVIPPDLRPLVPLDGGRFATSDLNDLYRRVINRNNRLKRLQELNAPDIIIRNEKRMLQEAVDALFDNGRRGKTITGPNKRPLKSLSDMLKGKQGRFRQNLLGKRVDYSGRSVIVVGPELKLHQCGLPKIMALELFKPFIYNKLEEKGYVTTIKSAKKMVEKERPEVWDILDEVIREHPVLLNRAPTLHRLGIQAFEPVLIEGKAIQLHPLVCTAFNADFDGDQMAVHVPLSIEAQMEARVLMMSTNNILSPAHGKPIIVPSQDIVLGIYYMTRERAFARGEGKVFASPEEVRAAYDQGEVDLQAKVWVRMDGKRVETTVGRVLLYDIVPRRLSFDAINKVMDKKQLQGLIDLTYRLCGEKETVLLADRVRSMGYGNATRAGISIALDNMVIPRKKVDLLERATREVDDIQAQYTEGLITIGERYNKVIDIWAQVTEEVAQEMMGEIGTETAVGTGKDGKREERRQPSFNPIYIMADSGARGSAQQIRQLAGMRGLMAKPSGEIIETPITANFREGLNVLQYFISTHGARKGLADTALKTANSGYLTRRLVDVAQDAIITEYDCGAMDGITLGALVEGGEIIEPMGERILGRVALDDILDAFSGNVLVKANEEIDEGRVKLIENSGIDKVKIRSVLTCQARRGICVECYGRDLARGRKVNIGEAVGVIAAQSIGEPGTQLTMRTFHIGGAASRRAEQSTIENRNAGLIKFNNVSVAKKHDGTLIVMNRNGEIIVTDDQGRERERYGVVYGAKLLVREGQKVEANQLLAEWDPYSMPIITEVAGRVKYGDLVDGVTISEQVDEITGLARKAVIASKDPDARPRISIKDEEGKTKKLANSDADARYMLPEGANLVVNDGDEVDAGDVIAKMPRETTKTKDITGGLPRVAELFEARKPKEHAVISEIDGVVAFGKDTKGKRKVVITPEVDGKLRPDLAKEYLIGKGKHISVHTGDRVRAGEALMDGAANPHDILRVLGEKELARWLVDEVQEVYRLQGVKINDKHIETIVRQMLRRVRIVDVGDTEFLADEQVEKFAFEEENERVLKAGGRAAQGEPLLLGITKASLSTESFISASSFQETTKVLTEAAISGKVDYLRGLKENVIMGRLVPAGTGLGAYKHLDIEVETPVDAVEEAEEALAVGAEE</sequence>
<dbReference type="EC" id="2.7.7.6" evidence="1"/>
<dbReference type="EMBL" id="CP000251">
    <property type="protein sequence ID" value="ABC81366.1"/>
    <property type="molecule type" value="Genomic_DNA"/>
</dbReference>
<dbReference type="RefSeq" id="WP_011420649.1">
    <property type="nucleotide sequence ID" value="NC_007760.1"/>
</dbReference>
<dbReference type="SMR" id="Q2II85"/>
<dbReference type="STRING" id="290397.Adeh_1593"/>
<dbReference type="KEGG" id="ade:Adeh_1593"/>
<dbReference type="eggNOG" id="COG0086">
    <property type="taxonomic scope" value="Bacteria"/>
</dbReference>
<dbReference type="HOGENOM" id="CLU_000524_3_1_7"/>
<dbReference type="OrthoDB" id="9815296at2"/>
<dbReference type="Proteomes" id="UP000001935">
    <property type="component" value="Chromosome"/>
</dbReference>
<dbReference type="GO" id="GO:0000428">
    <property type="term" value="C:DNA-directed RNA polymerase complex"/>
    <property type="evidence" value="ECO:0007669"/>
    <property type="project" value="UniProtKB-KW"/>
</dbReference>
<dbReference type="GO" id="GO:0003677">
    <property type="term" value="F:DNA binding"/>
    <property type="evidence" value="ECO:0007669"/>
    <property type="project" value="UniProtKB-UniRule"/>
</dbReference>
<dbReference type="GO" id="GO:0003899">
    <property type="term" value="F:DNA-directed RNA polymerase activity"/>
    <property type="evidence" value="ECO:0007669"/>
    <property type="project" value="UniProtKB-UniRule"/>
</dbReference>
<dbReference type="GO" id="GO:0000287">
    <property type="term" value="F:magnesium ion binding"/>
    <property type="evidence" value="ECO:0007669"/>
    <property type="project" value="UniProtKB-UniRule"/>
</dbReference>
<dbReference type="GO" id="GO:0008270">
    <property type="term" value="F:zinc ion binding"/>
    <property type="evidence" value="ECO:0007669"/>
    <property type="project" value="UniProtKB-UniRule"/>
</dbReference>
<dbReference type="GO" id="GO:0006351">
    <property type="term" value="P:DNA-templated transcription"/>
    <property type="evidence" value="ECO:0007669"/>
    <property type="project" value="UniProtKB-UniRule"/>
</dbReference>
<dbReference type="CDD" id="cd02655">
    <property type="entry name" value="RNAP_beta'_C"/>
    <property type="match status" value="1"/>
</dbReference>
<dbReference type="CDD" id="cd01609">
    <property type="entry name" value="RNAP_beta'_N"/>
    <property type="match status" value="1"/>
</dbReference>
<dbReference type="FunFam" id="1.10.132.30:FF:000003">
    <property type="entry name" value="DNA-directed RNA polymerase subunit beta"/>
    <property type="match status" value="1"/>
</dbReference>
<dbReference type="FunFam" id="1.10.40.90:FF:000001">
    <property type="entry name" value="DNA-directed RNA polymerase subunit beta"/>
    <property type="match status" value="1"/>
</dbReference>
<dbReference type="Gene3D" id="1.10.132.30">
    <property type="match status" value="1"/>
</dbReference>
<dbReference type="Gene3D" id="1.10.150.390">
    <property type="match status" value="1"/>
</dbReference>
<dbReference type="Gene3D" id="1.10.1790.20">
    <property type="match status" value="1"/>
</dbReference>
<dbReference type="Gene3D" id="1.10.40.90">
    <property type="match status" value="1"/>
</dbReference>
<dbReference type="Gene3D" id="2.40.40.20">
    <property type="match status" value="1"/>
</dbReference>
<dbReference type="Gene3D" id="2.40.50.100">
    <property type="match status" value="3"/>
</dbReference>
<dbReference type="Gene3D" id="4.10.860.120">
    <property type="entry name" value="RNA polymerase II, clamp domain"/>
    <property type="match status" value="1"/>
</dbReference>
<dbReference type="Gene3D" id="1.10.274.100">
    <property type="entry name" value="RNA polymerase Rpb1, domain 3"/>
    <property type="match status" value="2"/>
</dbReference>
<dbReference type="HAMAP" id="MF_01322">
    <property type="entry name" value="RNApol_bact_RpoC"/>
    <property type="match status" value="1"/>
</dbReference>
<dbReference type="InterPro" id="IPR045867">
    <property type="entry name" value="DNA-dir_RpoC_beta_prime"/>
</dbReference>
<dbReference type="InterPro" id="IPR012754">
    <property type="entry name" value="DNA-dir_RpoC_beta_prime_bact"/>
</dbReference>
<dbReference type="InterPro" id="IPR000722">
    <property type="entry name" value="RNA_pol_asu"/>
</dbReference>
<dbReference type="InterPro" id="IPR006592">
    <property type="entry name" value="RNA_pol_N"/>
</dbReference>
<dbReference type="InterPro" id="IPR007080">
    <property type="entry name" value="RNA_pol_Rpb1_1"/>
</dbReference>
<dbReference type="InterPro" id="IPR007066">
    <property type="entry name" value="RNA_pol_Rpb1_3"/>
</dbReference>
<dbReference type="InterPro" id="IPR042102">
    <property type="entry name" value="RNA_pol_Rpb1_3_sf"/>
</dbReference>
<dbReference type="InterPro" id="IPR007083">
    <property type="entry name" value="RNA_pol_Rpb1_4"/>
</dbReference>
<dbReference type="InterPro" id="IPR007081">
    <property type="entry name" value="RNA_pol_Rpb1_5"/>
</dbReference>
<dbReference type="InterPro" id="IPR044893">
    <property type="entry name" value="RNA_pol_Rpb1_clamp_domain"/>
</dbReference>
<dbReference type="InterPro" id="IPR038120">
    <property type="entry name" value="Rpb1_funnel_sf"/>
</dbReference>
<dbReference type="NCBIfam" id="TIGR02386">
    <property type="entry name" value="rpoC_TIGR"/>
    <property type="match status" value="1"/>
</dbReference>
<dbReference type="PANTHER" id="PTHR19376">
    <property type="entry name" value="DNA-DIRECTED RNA POLYMERASE"/>
    <property type="match status" value="1"/>
</dbReference>
<dbReference type="PANTHER" id="PTHR19376:SF54">
    <property type="entry name" value="DNA-DIRECTED RNA POLYMERASE SUBUNIT BETA"/>
    <property type="match status" value="1"/>
</dbReference>
<dbReference type="Pfam" id="PF04997">
    <property type="entry name" value="RNA_pol_Rpb1_1"/>
    <property type="match status" value="1"/>
</dbReference>
<dbReference type="Pfam" id="PF00623">
    <property type="entry name" value="RNA_pol_Rpb1_2"/>
    <property type="match status" value="1"/>
</dbReference>
<dbReference type="Pfam" id="PF04983">
    <property type="entry name" value="RNA_pol_Rpb1_3"/>
    <property type="match status" value="1"/>
</dbReference>
<dbReference type="Pfam" id="PF05000">
    <property type="entry name" value="RNA_pol_Rpb1_4"/>
    <property type="match status" value="1"/>
</dbReference>
<dbReference type="Pfam" id="PF04998">
    <property type="entry name" value="RNA_pol_Rpb1_5"/>
    <property type="match status" value="1"/>
</dbReference>
<dbReference type="SMART" id="SM00663">
    <property type="entry name" value="RPOLA_N"/>
    <property type="match status" value="1"/>
</dbReference>
<dbReference type="SUPFAM" id="SSF64484">
    <property type="entry name" value="beta and beta-prime subunits of DNA dependent RNA-polymerase"/>
    <property type="match status" value="1"/>
</dbReference>
<proteinExistence type="inferred from homology"/>
<keyword id="KW-0240">DNA-directed RNA polymerase</keyword>
<keyword id="KW-0460">Magnesium</keyword>
<keyword id="KW-0479">Metal-binding</keyword>
<keyword id="KW-0548">Nucleotidyltransferase</keyword>
<keyword id="KW-1185">Reference proteome</keyword>
<keyword id="KW-0804">Transcription</keyword>
<keyword id="KW-0808">Transferase</keyword>
<keyword id="KW-0862">Zinc</keyword>
<comment type="function">
    <text evidence="1">DNA-dependent RNA polymerase catalyzes the transcription of DNA into RNA using the four ribonucleoside triphosphates as substrates.</text>
</comment>
<comment type="catalytic activity">
    <reaction evidence="1">
        <text>RNA(n) + a ribonucleoside 5'-triphosphate = RNA(n+1) + diphosphate</text>
        <dbReference type="Rhea" id="RHEA:21248"/>
        <dbReference type="Rhea" id="RHEA-COMP:14527"/>
        <dbReference type="Rhea" id="RHEA-COMP:17342"/>
        <dbReference type="ChEBI" id="CHEBI:33019"/>
        <dbReference type="ChEBI" id="CHEBI:61557"/>
        <dbReference type="ChEBI" id="CHEBI:140395"/>
        <dbReference type="EC" id="2.7.7.6"/>
    </reaction>
</comment>
<comment type="cofactor">
    <cofactor evidence="1">
        <name>Mg(2+)</name>
        <dbReference type="ChEBI" id="CHEBI:18420"/>
    </cofactor>
    <text evidence="1">Binds 1 Mg(2+) ion per subunit.</text>
</comment>
<comment type="cofactor">
    <cofactor evidence="1">
        <name>Zn(2+)</name>
        <dbReference type="ChEBI" id="CHEBI:29105"/>
    </cofactor>
    <text evidence="1">Binds 2 Zn(2+) ions per subunit.</text>
</comment>
<comment type="subunit">
    <text evidence="1">The RNAP catalytic core consists of 2 alpha, 1 beta, 1 beta' and 1 omega subunit. When a sigma factor is associated with the core the holoenzyme is formed, which can initiate transcription.</text>
</comment>
<comment type="similarity">
    <text evidence="1">Belongs to the RNA polymerase beta' chain family.</text>
</comment>
<organism>
    <name type="scientific">Anaeromyxobacter dehalogenans (strain 2CP-C)</name>
    <dbReference type="NCBI Taxonomy" id="290397"/>
    <lineage>
        <taxon>Bacteria</taxon>
        <taxon>Pseudomonadati</taxon>
        <taxon>Myxococcota</taxon>
        <taxon>Myxococcia</taxon>
        <taxon>Myxococcales</taxon>
        <taxon>Cystobacterineae</taxon>
        <taxon>Anaeromyxobacteraceae</taxon>
        <taxon>Anaeromyxobacter</taxon>
    </lineage>
</organism>
<protein>
    <recommendedName>
        <fullName evidence="1">DNA-directed RNA polymerase subunit beta'</fullName>
        <shortName evidence="1">RNAP subunit beta'</shortName>
        <ecNumber evidence="1">2.7.7.6</ecNumber>
    </recommendedName>
    <alternativeName>
        <fullName evidence="1">RNA polymerase subunit beta'</fullName>
    </alternativeName>
    <alternativeName>
        <fullName evidence="1">Transcriptase subunit beta'</fullName>
    </alternativeName>
</protein>